<organism>
    <name type="scientific">Edwardsiella ictaluri (strain 93-146)</name>
    <dbReference type="NCBI Taxonomy" id="634503"/>
    <lineage>
        <taxon>Bacteria</taxon>
        <taxon>Pseudomonadati</taxon>
        <taxon>Pseudomonadota</taxon>
        <taxon>Gammaproteobacteria</taxon>
        <taxon>Enterobacterales</taxon>
        <taxon>Hafniaceae</taxon>
        <taxon>Edwardsiella</taxon>
    </lineage>
</organism>
<evidence type="ECO:0000255" key="1">
    <source>
        <dbReference type="HAMAP-Rule" id="MF_00749"/>
    </source>
</evidence>
<evidence type="ECO:0000256" key="2">
    <source>
        <dbReference type="SAM" id="MobiDB-lite"/>
    </source>
</evidence>
<dbReference type="EMBL" id="CP001600">
    <property type="protein sequence ID" value="ACR68973.1"/>
    <property type="molecule type" value="Genomic_DNA"/>
</dbReference>
<dbReference type="RefSeq" id="WP_015871121.1">
    <property type="nucleotide sequence ID" value="NZ_CP169062.1"/>
</dbReference>
<dbReference type="SMR" id="C5BFL0"/>
<dbReference type="STRING" id="67780.B6E78_02085"/>
<dbReference type="GeneID" id="69538757"/>
<dbReference type="KEGG" id="eic:NT01EI_1796"/>
<dbReference type="PATRIC" id="fig|634503.3.peg.1609"/>
<dbReference type="HOGENOM" id="CLU_113254_0_0_6"/>
<dbReference type="OrthoDB" id="8421419at2"/>
<dbReference type="Proteomes" id="UP000001485">
    <property type="component" value="Chromosome"/>
</dbReference>
<dbReference type="GO" id="GO:0005829">
    <property type="term" value="C:cytosol"/>
    <property type="evidence" value="ECO:0007669"/>
    <property type="project" value="TreeGrafter"/>
</dbReference>
<dbReference type="GO" id="GO:0033592">
    <property type="term" value="F:RNA strand annealing activity"/>
    <property type="evidence" value="ECO:0007669"/>
    <property type="project" value="UniProtKB-UniRule"/>
</dbReference>
<dbReference type="GO" id="GO:0034057">
    <property type="term" value="F:RNA strand-exchange activity"/>
    <property type="evidence" value="ECO:0007669"/>
    <property type="project" value="UniProtKB-UniRule"/>
</dbReference>
<dbReference type="GO" id="GO:0010608">
    <property type="term" value="P:post-transcriptional regulation of gene expression"/>
    <property type="evidence" value="ECO:0007669"/>
    <property type="project" value="InterPro"/>
</dbReference>
<dbReference type="FunFam" id="1.10.1710.10:FF:000001">
    <property type="entry name" value="RNA chaperone ProQ"/>
    <property type="match status" value="1"/>
</dbReference>
<dbReference type="Gene3D" id="1.10.1710.10">
    <property type="entry name" value="ProQ/FinO domain"/>
    <property type="match status" value="1"/>
</dbReference>
<dbReference type="HAMAP" id="MF_00749">
    <property type="entry name" value="ProQ"/>
    <property type="match status" value="1"/>
</dbReference>
<dbReference type="InterPro" id="IPR023529">
    <property type="entry name" value="ProQ"/>
</dbReference>
<dbReference type="InterPro" id="IPR016103">
    <property type="entry name" value="ProQ/FinO"/>
</dbReference>
<dbReference type="InterPro" id="IPR036442">
    <property type="entry name" value="ProQ/FinO_sf"/>
</dbReference>
<dbReference type="InterPro" id="IPR035236">
    <property type="entry name" value="ProQ_C"/>
</dbReference>
<dbReference type="NCBIfam" id="NF003434">
    <property type="entry name" value="PRK04950.1"/>
    <property type="match status" value="1"/>
</dbReference>
<dbReference type="PANTHER" id="PTHR38106">
    <property type="entry name" value="RNA CHAPERONE PROQ"/>
    <property type="match status" value="1"/>
</dbReference>
<dbReference type="PANTHER" id="PTHR38106:SF1">
    <property type="entry name" value="RNA CHAPERONE PROQ"/>
    <property type="match status" value="1"/>
</dbReference>
<dbReference type="Pfam" id="PF04352">
    <property type="entry name" value="ProQ"/>
    <property type="match status" value="1"/>
</dbReference>
<dbReference type="Pfam" id="PF17516">
    <property type="entry name" value="ProQ_C"/>
    <property type="match status" value="1"/>
</dbReference>
<dbReference type="SMART" id="SM00945">
    <property type="entry name" value="ProQ"/>
    <property type="match status" value="1"/>
</dbReference>
<dbReference type="SUPFAM" id="SSF48657">
    <property type="entry name" value="FinO-like"/>
    <property type="match status" value="1"/>
</dbReference>
<gene>
    <name evidence="1" type="primary">proQ</name>
    <name type="ordered locus">NT01EI_1796</name>
</gene>
<comment type="function">
    <text evidence="1">RNA chaperone with significant RNA binding, RNA strand exchange and RNA duplexing activities. May regulate ProP activity through an RNA-based, post-transcriptional mechanism.</text>
</comment>
<comment type="subcellular location">
    <subcellularLocation>
        <location evidence="1">Cytoplasm</location>
    </subcellularLocation>
</comment>
<comment type="similarity">
    <text evidence="1">Belongs to the ProQ family.</text>
</comment>
<reference key="1">
    <citation type="submission" date="2009-03" db="EMBL/GenBank/DDBJ databases">
        <title>Complete genome sequence of Edwardsiella ictaluri 93-146.</title>
        <authorList>
            <person name="Williams M.L."/>
            <person name="Gillaspy A.F."/>
            <person name="Dyer D.W."/>
            <person name="Thune R.L."/>
            <person name="Waldbieser G.C."/>
            <person name="Schuster S.C."/>
            <person name="Gipson J."/>
            <person name="Zaitshik J."/>
            <person name="Landry C."/>
            <person name="Lawrence M.L."/>
        </authorList>
    </citation>
    <scope>NUCLEOTIDE SEQUENCE [LARGE SCALE GENOMIC DNA]</scope>
    <source>
        <strain>93-146</strain>
    </source>
</reference>
<proteinExistence type="inferred from homology"/>
<keyword id="KW-0143">Chaperone</keyword>
<keyword id="KW-0963">Cytoplasm</keyword>
<keyword id="KW-0694">RNA-binding</keyword>
<feature type="chain" id="PRO_1000212846" description="RNA chaperone ProQ">
    <location>
        <begin position="1"/>
        <end position="234"/>
    </location>
</feature>
<feature type="region of interest" description="Disordered" evidence="2">
    <location>
        <begin position="104"/>
        <end position="186"/>
    </location>
</feature>
<feature type="compositionally biased region" description="Basic and acidic residues" evidence="2">
    <location>
        <begin position="104"/>
        <end position="130"/>
    </location>
</feature>
<feature type="compositionally biased region" description="Basic residues" evidence="2">
    <location>
        <begin position="131"/>
        <end position="142"/>
    </location>
</feature>
<feature type="compositionally biased region" description="Basic and acidic residues" evidence="2">
    <location>
        <begin position="143"/>
        <end position="156"/>
    </location>
</feature>
<feature type="compositionally biased region" description="Basic and acidic residues" evidence="2">
    <location>
        <begin position="163"/>
        <end position="176"/>
    </location>
</feature>
<feature type="compositionally biased region" description="Polar residues" evidence="2">
    <location>
        <begin position="177"/>
        <end position="186"/>
    </location>
</feature>
<protein>
    <recommendedName>
        <fullName evidence="1">RNA chaperone ProQ</fullName>
    </recommendedName>
</protein>
<accession>C5BFL0</accession>
<name>PROQ_EDWI9</name>
<sequence>MENQPKLNSSKEVIAFLAQRFPQCFSTEGEARPLKIGIFQDLVARMQGEENGLSKTQLRSALRLYTSSWRYLHGVKLGAERVDLDGNACGVLDEQHVEHARQQLEEAKARVQAQRDARKREAAENGEKREPRRPRPAGKKPTARRDGEQGSKEVRKPRAAKATSERKPRAKSETTEQRSTPVTSLEQLHLGQTVKVSAGKHAMEASVLEITKDGVRVQLSNGLAMIVRTEHLQF</sequence>